<name>RAPA_SHEAM</name>
<protein>
    <recommendedName>
        <fullName evidence="1">RNA polymerase-associated protein RapA</fullName>
        <ecNumber evidence="1">3.6.4.-</ecNumber>
    </recommendedName>
    <alternativeName>
        <fullName evidence="1">ATP-dependent helicase HepA</fullName>
    </alternativeName>
</protein>
<feature type="chain" id="PRO_1000088377" description="RNA polymerase-associated protein RapA">
    <location>
        <begin position="1"/>
        <end position="967"/>
    </location>
</feature>
<feature type="domain" description="Helicase ATP-binding" evidence="1">
    <location>
        <begin position="163"/>
        <end position="332"/>
    </location>
</feature>
<feature type="domain" description="Helicase C-terminal" evidence="1">
    <location>
        <begin position="491"/>
        <end position="639"/>
    </location>
</feature>
<feature type="short sequence motif" description="DEAH box">
    <location>
        <begin position="278"/>
        <end position="281"/>
    </location>
</feature>
<feature type="binding site" evidence="1">
    <location>
        <begin position="176"/>
        <end position="183"/>
    </location>
    <ligand>
        <name>ATP</name>
        <dbReference type="ChEBI" id="CHEBI:30616"/>
    </ligand>
</feature>
<reference key="1">
    <citation type="submission" date="2006-12" db="EMBL/GenBank/DDBJ databases">
        <title>Complete sequence of Shewanella amazonensis SB2B.</title>
        <authorList>
            <consortium name="US DOE Joint Genome Institute"/>
            <person name="Copeland A."/>
            <person name="Lucas S."/>
            <person name="Lapidus A."/>
            <person name="Barry K."/>
            <person name="Detter J.C."/>
            <person name="Glavina del Rio T."/>
            <person name="Hammon N."/>
            <person name="Israni S."/>
            <person name="Dalin E."/>
            <person name="Tice H."/>
            <person name="Pitluck S."/>
            <person name="Munk A.C."/>
            <person name="Brettin T."/>
            <person name="Bruce D."/>
            <person name="Han C."/>
            <person name="Tapia R."/>
            <person name="Gilna P."/>
            <person name="Schmutz J."/>
            <person name="Larimer F."/>
            <person name="Land M."/>
            <person name="Hauser L."/>
            <person name="Kyrpides N."/>
            <person name="Mikhailova N."/>
            <person name="Fredrickson J."/>
            <person name="Richardson P."/>
        </authorList>
    </citation>
    <scope>NUCLEOTIDE SEQUENCE [LARGE SCALE GENOMIC DNA]</scope>
    <source>
        <strain>ATCC BAA-1098 / SB2B</strain>
    </source>
</reference>
<comment type="function">
    <text evidence="1">Transcription regulator that activates transcription by stimulating RNA polymerase (RNAP) recycling in case of stress conditions such as supercoiled DNA or high salt concentrations. Probably acts by releasing the RNAP, when it is trapped or immobilized on tightly supercoiled DNA. Does not activate transcription on linear DNA. Probably not involved in DNA repair.</text>
</comment>
<comment type="subunit">
    <text evidence="1">Interacts with the RNAP. Has a higher affinity for the core RNAP than for the holoenzyme. Its ATPase activity is stimulated by binding to RNAP.</text>
</comment>
<comment type="similarity">
    <text evidence="1">Belongs to the SNF2/RAD54 helicase family. RapA subfamily.</text>
</comment>
<keyword id="KW-0010">Activator</keyword>
<keyword id="KW-0067">ATP-binding</keyword>
<keyword id="KW-0238">DNA-binding</keyword>
<keyword id="KW-0347">Helicase</keyword>
<keyword id="KW-0378">Hydrolase</keyword>
<keyword id="KW-0547">Nucleotide-binding</keyword>
<keyword id="KW-1185">Reference proteome</keyword>
<keyword id="KW-0804">Transcription</keyword>
<keyword id="KW-0805">Transcription regulation</keyword>
<proteinExistence type="inferred from homology"/>
<accession>A1SAC7</accession>
<sequence length="967" mass="108828">MSFAVGQRWISDTESELGLGTVVQIEGRMVTLLFPATGENRMFAMAEAPLTRVIYNPGDTIDSAEGWGMTVDKVEELNGLVFYLGKRTDTGEDTMLRETLLEHNIRFNKPQDRLYAGQIDRIERFGVRYKAQLLRHKQATSPLLGLQGPRVGLIPHQLWIAHEVGRRHAPRVLLADEVGLGKTIEAGLIIHQQLMTGRAERVLVIVPDTLRHQWLVEMLRRFNLRFSVFDEDRCVEAFADHDNPFYTEQLVICSLELLRKKRRLEQALDADWDLMVVDEAHHLEWSEDEPSRAYQVVEALAEVVPGVLLLTATPDQLGHQSHFARLRLLDPDRFYDYQAFLDEEKGYQAVAEAADALASGIKLSDEAINGLTELLSEKDIAPAIRQIQAENLDEELRQAARDELLQELLDRHGTGRVLFRNSRASVKGFPKREFHSHGFELPEQYVTAMRVNAMMGGARTQEARVAQALSPERIYQEFDDNNASWWKFDPRVDWLIDFLKSHRSKKVLVIASRAETALALEEALRTREGIQATVFHEGMSIIERDKAGAYFAQEEGGAQALICSEIGSEGRNFQFASQLVLFDLPLNPDLLEQRIGRLDRIGQRHDVQIHLPFLKHTAQEQLMHWYHEGLCAFELTCPGGHVLFGEFKERLLSVLTGESDELDELMADTKARYKALKAAMEQGRDKLLELNSHGGAKAEAITASLSDADEDTDLIASVIRLWDVIGIDQDDKGENSIVLRTTEHMMYPTYPGLNEDGVTVTFDRNTALSRDDIALITLEHPLVQTGLDLITGSDTGTTCVALLKNKALPAGTIFLELIYLAETTAPKASQLYRYLPPTPVRVLLDKNGNNLSDKVDYDSFDKQLSGVNRHIASKLVNASQTMLHPLFAKGEEFAGEALETLTQDARARMESQLGAELSRLEALKAVNPSIREEELEHLRNMMQELSGYLGNTQLKLDAIRLVLVSHN</sequence>
<evidence type="ECO:0000255" key="1">
    <source>
        <dbReference type="HAMAP-Rule" id="MF_01821"/>
    </source>
</evidence>
<organism>
    <name type="scientific">Shewanella amazonensis (strain ATCC BAA-1098 / SB2B)</name>
    <dbReference type="NCBI Taxonomy" id="326297"/>
    <lineage>
        <taxon>Bacteria</taxon>
        <taxon>Pseudomonadati</taxon>
        <taxon>Pseudomonadota</taxon>
        <taxon>Gammaproteobacteria</taxon>
        <taxon>Alteromonadales</taxon>
        <taxon>Shewanellaceae</taxon>
        <taxon>Shewanella</taxon>
    </lineage>
</organism>
<dbReference type="EC" id="3.6.4.-" evidence="1"/>
<dbReference type="EMBL" id="CP000507">
    <property type="protein sequence ID" value="ABM01334.1"/>
    <property type="molecule type" value="Genomic_DNA"/>
</dbReference>
<dbReference type="RefSeq" id="WP_011761238.1">
    <property type="nucleotide sequence ID" value="NC_008700.1"/>
</dbReference>
<dbReference type="SMR" id="A1SAC7"/>
<dbReference type="STRING" id="326297.Sama_3131"/>
<dbReference type="KEGG" id="saz:Sama_3131"/>
<dbReference type="eggNOG" id="COG0553">
    <property type="taxonomic scope" value="Bacteria"/>
</dbReference>
<dbReference type="HOGENOM" id="CLU_011520_0_0_6"/>
<dbReference type="OrthoDB" id="9814088at2"/>
<dbReference type="Proteomes" id="UP000009175">
    <property type="component" value="Chromosome"/>
</dbReference>
<dbReference type="GO" id="GO:0005524">
    <property type="term" value="F:ATP binding"/>
    <property type="evidence" value="ECO:0007669"/>
    <property type="project" value="UniProtKB-UniRule"/>
</dbReference>
<dbReference type="GO" id="GO:0003677">
    <property type="term" value="F:DNA binding"/>
    <property type="evidence" value="ECO:0007669"/>
    <property type="project" value="UniProtKB-KW"/>
</dbReference>
<dbReference type="GO" id="GO:0004386">
    <property type="term" value="F:helicase activity"/>
    <property type="evidence" value="ECO:0007669"/>
    <property type="project" value="UniProtKB-UniRule"/>
</dbReference>
<dbReference type="GO" id="GO:0016817">
    <property type="term" value="F:hydrolase activity, acting on acid anhydrides"/>
    <property type="evidence" value="ECO:0007669"/>
    <property type="project" value="InterPro"/>
</dbReference>
<dbReference type="GO" id="GO:0006355">
    <property type="term" value="P:regulation of DNA-templated transcription"/>
    <property type="evidence" value="ECO:0007669"/>
    <property type="project" value="UniProtKB-UniRule"/>
</dbReference>
<dbReference type="CDD" id="cd18011">
    <property type="entry name" value="DEXDc_RapA"/>
    <property type="match status" value="1"/>
</dbReference>
<dbReference type="CDD" id="cd18793">
    <property type="entry name" value="SF2_C_SNF"/>
    <property type="match status" value="1"/>
</dbReference>
<dbReference type="Gene3D" id="2.30.30.140">
    <property type="match status" value="1"/>
</dbReference>
<dbReference type="Gene3D" id="2.30.30.930">
    <property type="match status" value="1"/>
</dbReference>
<dbReference type="Gene3D" id="3.30.360.80">
    <property type="match status" value="1"/>
</dbReference>
<dbReference type="Gene3D" id="6.10.140.1500">
    <property type="match status" value="1"/>
</dbReference>
<dbReference type="Gene3D" id="6.10.140.2230">
    <property type="match status" value="1"/>
</dbReference>
<dbReference type="Gene3D" id="3.40.50.300">
    <property type="entry name" value="P-loop containing nucleotide triphosphate hydrolases"/>
    <property type="match status" value="1"/>
</dbReference>
<dbReference type="Gene3D" id="3.40.50.10810">
    <property type="entry name" value="Tandem AAA-ATPase domain"/>
    <property type="match status" value="1"/>
</dbReference>
<dbReference type="HAMAP" id="MF_01821">
    <property type="entry name" value="Helicase_RapA"/>
    <property type="match status" value="1"/>
</dbReference>
<dbReference type="InterPro" id="IPR014001">
    <property type="entry name" value="Helicase_ATP-bd"/>
</dbReference>
<dbReference type="InterPro" id="IPR001650">
    <property type="entry name" value="Helicase_C-like"/>
</dbReference>
<dbReference type="InterPro" id="IPR023949">
    <property type="entry name" value="Helicase_RapA"/>
</dbReference>
<dbReference type="InterPro" id="IPR027417">
    <property type="entry name" value="P-loop_NTPase"/>
</dbReference>
<dbReference type="InterPro" id="IPR022737">
    <property type="entry name" value="RapA_C"/>
</dbReference>
<dbReference type="InterPro" id="IPR038718">
    <property type="entry name" value="SNF2-like_sf"/>
</dbReference>
<dbReference type="InterPro" id="IPR049730">
    <property type="entry name" value="SNF2/RAD54-like_C"/>
</dbReference>
<dbReference type="InterPro" id="IPR000330">
    <property type="entry name" value="SNF2_N"/>
</dbReference>
<dbReference type="InterPro" id="IPR040765">
    <property type="entry name" value="Tudor_1_RapA"/>
</dbReference>
<dbReference type="InterPro" id="IPR040766">
    <property type="entry name" value="Tudor_2_RapA"/>
</dbReference>
<dbReference type="NCBIfam" id="NF003426">
    <property type="entry name" value="PRK04914.1"/>
    <property type="match status" value="1"/>
</dbReference>
<dbReference type="PANTHER" id="PTHR45766">
    <property type="entry name" value="DNA ANNEALING HELICASE AND ENDONUCLEASE ZRANB3 FAMILY MEMBER"/>
    <property type="match status" value="1"/>
</dbReference>
<dbReference type="PANTHER" id="PTHR45766:SF6">
    <property type="entry name" value="SWI_SNF-RELATED MATRIX-ASSOCIATED ACTIN-DEPENDENT REGULATOR OF CHROMATIN SUBFAMILY A-LIKE PROTEIN 1"/>
    <property type="match status" value="1"/>
</dbReference>
<dbReference type="Pfam" id="PF00271">
    <property type="entry name" value="Helicase_C"/>
    <property type="match status" value="1"/>
</dbReference>
<dbReference type="Pfam" id="PF12137">
    <property type="entry name" value="RapA_C"/>
    <property type="match status" value="1"/>
</dbReference>
<dbReference type="Pfam" id="PF00176">
    <property type="entry name" value="SNF2-rel_dom"/>
    <property type="match status" value="1"/>
</dbReference>
<dbReference type="Pfam" id="PF18339">
    <property type="entry name" value="Tudor_1_RapA"/>
    <property type="match status" value="1"/>
</dbReference>
<dbReference type="Pfam" id="PF18337">
    <property type="entry name" value="Tudor_RapA"/>
    <property type="match status" value="1"/>
</dbReference>
<dbReference type="SMART" id="SM00487">
    <property type="entry name" value="DEXDc"/>
    <property type="match status" value="1"/>
</dbReference>
<dbReference type="SMART" id="SM00490">
    <property type="entry name" value="HELICc"/>
    <property type="match status" value="1"/>
</dbReference>
<dbReference type="SUPFAM" id="SSF52540">
    <property type="entry name" value="P-loop containing nucleoside triphosphate hydrolases"/>
    <property type="match status" value="2"/>
</dbReference>
<dbReference type="PROSITE" id="PS51192">
    <property type="entry name" value="HELICASE_ATP_BIND_1"/>
    <property type="match status" value="1"/>
</dbReference>
<dbReference type="PROSITE" id="PS51194">
    <property type="entry name" value="HELICASE_CTER"/>
    <property type="match status" value="1"/>
</dbReference>
<gene>
    <name evidence="1" type="primary">rapA</name>
    <name type="ordered locus">Sama_3131</name>
</gene>